<dbReference type="EMBL" id="EU282466">
    <property type="protein sequence ID" value="ABX83038.1"/>
    <property type="molecule type" value="mRNA"/>
</dbReference>
<dbReference type="EMBL" id="AP003076">
    <property type="protein sequence ID" value="BAD86967.1"/>
    <property type="molecule type" value="Genomic_DNA"/>
</dbReference>
<dbReference type="EMBL" id="AP008207">
    <property type="protein sequence ID" value="BAH91296.1"/>
    <property type="molecule type" value="Genomic_DNA"/>
</dbReference>
<dbReference type="EMBL" id="AP014957">
    <property type="protein sequence ID" value="BAS74334.1"/>
    <property type="molecule type" value="Genomic_DNA"/>
</dbReference>
<dbReference type="EMBL" id="AK242185">
    <property type="protein sequence ID" value="BAH01214.1"/>
    <property type="molecule type" value="mRNA"/>
</dbReference>
<dbReference type="RefSeq" id="XP_015643571.1">
    <property type="nucleotide sequence ID" value="XM_015788085.1"/>
</dbReference>
<dbReference type="SMR" id="Q5JNJ5"/>
<dbReference type="FunCoup" id="Q5JNJ5">
    <property type="interactions" value="1330"/>
</dbReference>
<dbReference type="STRING" id="39947.Q5JNJ5"/>
<dbReference type="GlyCosmos" id="Q5JNJ5">
    <property type="glycosylation" value="1 site, No reported glycans"/>
</dbReference>
<dbReference type="PaxDb" id="39947-Q5JNJ5"/>
<dbReference type="EnsemblPlants" id="Os01t0748150-01">
    <property type="protein sequence ID" value="Os01t0748150-01"/>
    <property type="gene ID" value="Os01g0748150"/>
</dbReference>
<dbReference type="Gramene" id="Os01t0748150-01">
    <property type="protein sequence ID" value="Os01t0748150-01"/>
    <property type="gene ID" value="Os01g0748150"/>
</dbReference>
<dbReference type="KEGG" id="dosa:Os01g0748150"/>
<dbReference type="eggNOG" id="ENOG502RZ81">
    <property type="taxonomic scope" value="Eukaryota"/>
</dbReference>
<dbReference type="HOGENOM" id="CLU_058719_1_0_1"/>
<dbReference type="InParanoid" id="Q5JNJ5"/>
<dbReference type="OMA" id="TVMSTGH"/>
<dbReference type="OrthoDB" id="2015640at2759"/>
<dbReference type="Proteomes" id="UP000000763">
    <property type="component" value="Chromosome 1"/>
</dbReference>
<dbReference type="Proteomes" id="UP000059680">
    <property type="component" value="Chromosome 1"/>
</dbReference>
<dbReference type="GO" id="GO:0032578">
    <property type="term" value="C:aleurone grain membrane"/>
    <property type="evidence" value="ECO:0000314"/>
    <property type="project" value="UniProtKB"/>
</dbReference>
<dbReference type="GO" id="GO:0005886">
    <property type="term" value="C:plasma membrane"/>
    <property type="evidence" value="ECO:0000318"/>
    <property type="project" value="GO_Central"/>
</dbReference>
<dbReference type="GO" id="GO:0098552">
    <property type="term" value="C:side of membrane"/>
    <property type="evidence" value="ECO:0007669"/>
    <property type="project" value="UniProtKB-KW"/>
</dbReference>
<dbReference type="GO" id="GO:0005773">
    <property type="term" value="C:vacuole"/>
    <property type="evidence" value="ECO:0007669"/>
    <property type="project" value="UniProtKB-KW"/>
</dbReference>
<dbReference type="GO" id="GO:0009055">
    <property type="term" value="F:electron transfer activity"/>
    <property type="evidence" value="ECO:0007669"/>
    <property type="project" value="InterPro"/>
</dbReference>
<dbReference type="CDD" id="cd11019">
    <property type="entry name" value="OsENODL1_like"/>
    <property type="match status" value="1"/>
</dbReference>
<dbReference type="FunFam" id="2.60.40.420:FF:000010">
    <property type="entry name" value="Early nodulin-like protein 1"/>
    <property type="match status" value="1"/>
</dbReference>
<dbReference type="Gene3D" id="2.60.40.420">
    <property type="entry name" value="Cupredoxins - blue copper proteins"/>
    <property type="match status" value="1"/>
</dbReference>
<dbReference type="InterPro" id="IPR008972">
    <property type="entry name" value="Cupredoxin"/>
</dbReference>
<dbReference type="InterPro" id="IPR041846">
    <property type="entry name" value="ENL_dom"/>
</dbReference>
<dbReference type="InterPro" id="IPR039391">
    <property type="entry name" value="Phytocyanin-like"/>
</dbReference>
<dbReference type="InterPro" id="IPR003245">
    <property type="entry name" value="Phytocyanin_dom"/>
</dbReference>
<dbReference type="PANTHER" id="PTHR33021">
    <property type="entry name" value="BLUE COPPER PROTEIN"/>
    <property type="match status" value="1"/>
</dbReference>
<dbReference type="PANTHER" id="PTHR33021:SF435">
    <property type="entry name" value="EARLY NODULIN-LIKE PROTEIN 1"/>
    <property type="match status" value="1"/>
</dbReference>
<dbReference type="Pfam" id="PF02298">
    <property type="entry name" value="Cu_bind_like"/>
    <property type="match status" value="1"/>
</dbReference>
<dbReference type="SUPFAM" id="SSF49503">
    <property type="entry name" value="Cupredoxins"/>
    <property type="match status" value="1"/>
</dbReference>
<dbReference type="PROSITE" id="PS51485">
    <property type="entry name" value="PHYTOCYANIN"/>
    <property type="match status" value="1"/>
</dbReference>
<keyword id="KW-0903">Direct protein sequencing</keyword>
<keyword id="KW-1015">Disulfide bond</keyword>
<keyword id="KW-0325">Glycoprotein</keyword>
<keyword id="KW-0336">GPI-anchor</keyword>
<keyword id="KW-0449">Lipoprotein</keyword>
<keyword id="KW-0472">Membrane</keyword>
<keyword id="KW-1185">Reference proteome</keyword>
<keyword id="KW-0732">Signal</keyword>
<keyword id="KW-0926">Vacuole</keyword>
<comment type="function">
    <text evidence="10">May act as a carbohydrate transporter.</text>
</comment>
<comment type="subcellular location">
    <subcellularLocation>
        <location evidence="11">Vacuole</location>
        <location evidence="11">Aleurone grain membrane</location>
        <topology evidence="1">Lipid-anchor</topology>
        <topology evidence="1">GPI-anchor</topology>
    </subcellularLocation>
</comment>
<comment type="tissue specificity">
    <text evidence="5 6 7">Expressed ubiquitously (PubMed:21984902). Accumulates particularly in reproductive tissues, especially in maturing seeds (PubMed:15653800, PubMed:20423940).</text>
</comment>
<comment type="similarity">
    <text evidence="11">Belongs to the early nodulin-like (ENODL) family.</text>
</comment>
<name>ENOL1_ORYSJ</name>
<gene>
    <name evidence="8" type="primary">ENODL1</name>
    <name evidence="9" type="synonym">ELA1</name>
    <name evidence="11" type="ordered locus">Os01g0748150</name>
    <name evidence="11" type="ordered locus">LOC_Os01g54430</name>
    <name evidence="12" type="ORF">P0481E12.22</name>
</gene>
<reference key="1">
    <citation type="journal article" date="2004" name="Plant Cell Physiol.">
        <title>Isolation and identification of glycosylphosphatidylinositol-anchored arabinogalactan proteins and novel beta-glucosyl Yariv-reactive proteins from seeds of rice (Oryza sativa).</title>
        <authorList>
            <person name="Mashiguchi K."/>
            <person name="Yamaguchi I."/>
            <person name="Suzuki Y."/>
        </authorList>
    </citation>
    <scope>NUCLEOTIDE SEQUENCE [GENOMIC DNA]</scope>
    <scope>PROTEIN SEQUENCE OF 29-43; 94-119 AND 128-136</scope>
    <scope>TISSUE SPECIFICITY</scope>
    <source>
        <strain>cv. Koshihikari</strain>
        <tissue>Aleurone</tissue>
    </source>
</reference>
<reference key="2">
    <citation type="journal article" date="2002" name="Nature">
        <title>The genome sequence and structure of rice chromosome 1.</title>
        <authorList>
            <person name="Sasaki T."/>
            <person name="Matsumoto T."/>
            <person name="Yamamoto K."/>
            <person name="Sakata K."/>
            <person name="Baba T."/>
            <person name="Katayose Y."/>
            <person name="Wu J."/>
            <person name="Niimura Y."/>
            <person name="Cheng Z."/>
            <person name="Nagamura Y."/>
            <person name="Antonio B.A."/>
            <person name="Kanamori H."/>
            <person name="Hosokawa S."/>
            <person name="Masukawa M."/>
            <person name="Arikawa K."/>
            <person name="Chiden Y."/>
            <person name="Hayashi M."/>
            <person name="Okamoto M."/>
            <person name="Ando T."/>
            <person name="Aoki H."/>
            <person name="Arita K."/>
            <person name="Hamada M."/>
            <person name="Harada C."/>
            <person name="Hijishita S."/>
            <person name="Honda M."/>
            <person name="Ichikawa Y."/>
            <person name="Idonuma A."/>
            <person name="Iijima M."/>
            <person name="Ikeda M."/>
            <person name="Ikeno M."/>
            <person name="Ito S."/>
            <person name="Ito T."/>
            <person name="Ito Y."/>
            <person name="Ito Y."/>
            <person name="Iwabuchi A."/>
            <person name="Kamiya K."/>
            <person name="Karasawa W."/>
            <person name="Katagiri S."/>
            <person name="Kikuta A."/>
            <person name="Kobayashi N."/>
            <person name="Kono I."/>
            <person name="Machita K."/>
            <person name="Maehara T."/>
            <person name="Mizuno H."/>
            <person name="Mizubayashi T."/>
            <person name="Mukai Y."/>
            <person name="Nagasaki H."/>
            <person name="Nakashima M."/>
            <person name="Nakama Y."/>
            <person name="Nakamichi Y."/>
            <person name="Nakamura M."/>
            <person name="Namiki N."/>
            <person name="Negishi M."/>
            <person name="Ohta I."/>
            <person name="Ono N."/>
            <person name="Saji S."/>
            <person name="Sakai K."/>
            <person name="Shibata M."/>
            <person name="Shimokawa T."/>
            <person name="Shomura A."/>
            <person name="Song J."/>
            <person name="Takazaki Y."/>
            <person name="Terasawa K."/>
            <person name="Tsuji K."/>
            <person name="Waki K."/>
            <person name="Yamagata H."/>
            <person name="Yamane H."/>
            <person name="Yoshiki S."/>
            <person name="Yoshihara R."/>
            <person name="Yukawa K."/>
            <person name="Zhong H."/>
            <person name="Iwama H."/>
            <person name="Endo T."/>
            <person name="Ito H."/>
            <person name="Hahn J.H."/>
            <person name="Kim H.-I."/>
            <person name="Eun M.-Y."/>
            <person name="Yano M."/>
            <person name="Jiang J."/>
            <person name="Gojobori T."/>
        </authorList>
    </citation>
    <scope>NUCLEOTIDE SEQUENCE [LARGE SCALE GENOMIC DNA]</scope>
    <source>
        <strain>cv. Nipponbare</strain>
        <tissue>Pistil</tissue>
    </source>
</reference>
<reference key="3">
    <citation type="journal article" date="2005" name="Nature">
        <title>The map-based sequence of the rice genome.</title>
        <authorList>
            <consortium name="International rice genome sequencing project (IRGSP)"/>
        </authorList>
    </citation>
    <scope>NUCLEOTIDE SEQUENCE [LARGE SCALE GENOMIC DNA]</scope>
    <source>
        <strain>cv. Nipponbare</strain>
    </source>
</reference>
<reference key="4">
    <citation type="journal article" date="2008" name="Nucleic Acids Res.">
        <title>The rice annotation project database (RAP-DB): 2008 update.</title>
        <authorList>
            <consortium name="The rice annotation project (RAP)"/>
        </authorList>
    </citation>
    <scope>GENOME REANNOTATION</scope>
    <source>
        <strain>cv. Nipponbare</strain>
    </source>
</reference>
<reference key="5">
    <citation type="journal article" date="2013" name="Rice">
        <title>Improvement of the Oryza sativa Nipponbare reference genome using next generation sequence and optical map data.</title>
        <authorList>
            <person name="Kawahara Y."/>
            <person name="de la Bastide M."/>
            <person name="Hamilton J.P."/>
            <person name="Kanamori H."/>
            <person name="McCombie W.R."/>
            <person name="Ouyang S."/>
            <person name="Schwartz D.C."/>
            <person name="Tanaka T."/>
            <person name="Wu J."/>
            <person name="Zhou S."/>
            <person name="Childs K.L."/>
            <person name="Davidson R.M."/>
            <person name="Lin H."/>
            <person name="Quesada-Ocampo L."/>
            <person name="Vaillancourt B."/>
            <person name="Sakai H."/>
            <person name="Lee S.S."/>
            <person name="Kim J."/>
            <person name="Numa H."/>
            <person name="Itoh T."/>
            <person name="Buell C.R."/>
            <person name="Matsumoto T."/>
        </authorList>
    </citation>
    <scope>GENOME REANNOTATION</scope>
    <source>
        <strain>cv. Nipponbare</strain>
    </source>
</reference>
<reference key="6">
    <citation type="submission" date="2006-10" db="EMBL/GenBank/DDBJ databases">
        <title>Oryza sativa full length cDNA.</title>
        <authorList>
            <consortium name="The rice full-length cDNA consortium"/>
        </authorList>
    </citation>
    <scope>NUCLEOTIDE SEQUENCE [LARGE SCALE MRNA]</scope>
    <source>
        <strain>cv. Nipponbare</strain>
    </source>
</reference>
<reference key="7">
    <citation type="journal article" date="2010" name="J. Exp. Bot.">
        <title>Genome-wide identification, classification, and expression analysis of the arabinogalactan protein gene family in rice (Oryza sativa L.).</title>
        <authorList>
            <person name="Ma H."/>
            <person name="Zhao J."/>
        </authorList>
    </citation>
    <scope>TISSUE SPECIFICITY</scope>
</reference>
<reference key="8">
    <citation type="journal article" date="2011" name="PLoS ONE">
        <title>The phytocyanin gene family in rice (Oryza sativa L.): genome-wide identification, classification and transcriptional analysis.</title>
        <authorList>
            <person name="Ma H."/>
            <person name="Zhao H."/>
            <person name="Liu Z."/>
            <person name="Zhao J."/>
        </authorList>
    </citation>
    <scope>TISSUE SPECIFICITY</scope>
    <source>
        <strain>cv. Nipponbare</strain>
    </source>
</reference>
<reference key="9">
    <citation type="journal article" date="2014" name="Plant Cell Physiol.">
        <title>Emerging functions of nodulin-like proteins in non-nodulating plant species.</title>
        <authorList>
            <person name="Denance N."/>
            <person name="Szurek B."/>
            <person name="Noel L.D."/>
        </authorList>
    </citation>
    <scope>REVIEW ON NODULIN-LIKE PROTEINS</scope>
</reference>
<evidence type="ECO:0000255" key="1"/>
<evidence type="ECO:0000255" key="2">
    <source>
        <dbReference type="PROSITE-ProRule" id="PRU00498"/>
    </source>
</evidence>
<evidence type="ECO:0000255" key="3">
    <source>
        <dbReference type="PROSITE-ProRule" id="PRU00818"/>
    </source>
</evidence>
<evidence type="ECO:0000256" key="4">
    <source>
        <dbReference type="SAM" id="MobiDB-lite"/>
    </source>
</evidence>
<evidence type="ECO:0000269" key="5">
    <source>
    </source>
</evidence>
<evidence type="ECO:0000269" key="6">
    <source>
    </source>
</evidence>
<evidence type="ECO:0000269" key="7">
    <source>
    </source>
</evidence>
<evidence type="ECO:0000303" key="8">
    <source>
    </source>
</evidence>
<evidence type="ECO:0000303" key="9">
    <source>
    </source>
</evidence>
<evidence type="ECO:0000303" key="10">
    <source>
    </source>
</evidence>
<evidence type="ECO:0000305" key="11"/>
<evidence type="ECO:0000312" key="12">
    <source>
        <dbReference type="EMBL" id="BAD86967.1"/>
    </source>
</evidence>
<protein>
    <recommendedName>
        <fullName evidence="8">Early nodulin-like protein 1</fullName>
        <shortName evidence="8">OsENODL1</shortName>
    </recommendedName>
    <alternativeName>
        <fullName evidence="9">Early nodulin-like arabinogalactan protein 1</fullName>
        <shortName evidence="9">OsELA1</shortName>
    </alternativeName>
    <alternativeName>
        <fullName evidence="8">Phytocyanin-like protein</fullName>
    </alternativeName>
</protein>
<sequence length="237" mass="24922">MEASRRWPYAAWFMAVLGLVAVFSSSEAYVFYAGGRDGWVVDPAESFNYWAERNRFQVNDTIVFLHDDEVGGSVLQVTEGDFDTCSTGNPVQRLEDVAAGRSVFRFDRSGPFFFISGDEDRCQKGQKLYIIVMAVRPTKPSEAPEPAGAAGPVSSKSWSWQAFPPAGATTPPPLPPSWGSAPEHAQAPGKSSLGGSGGGEMSRSSSLGAPPPTSGAAGLAGVVASVVVGVLGALLMF</sequence>
<proteinExistence type="evidence at protein level"/>
<accession>Q5JNJ5</accession>
<accession>A0A0P0V862</accession>
<organism>
    <name type="scientific">Oryza sativa subsp. japonica</name>
    <name type="common">Rice</name>
    <dbReference type="NCBI Taxonomy" id="39947"/>
    <lineage>
        <taxon>Eukaryota</taxon>
        <taxon>Viridiplantae</taxon>
        <taxon>Streptophyta</taxon>
        <taxon>Embryophyta</taxon>
        <taxon>Tracheophyta</taxon>
        <taxon>Spermatophyta</taxon>
        <taxon>Magnoliopsida</taxon>
        <taxon>Liliopsida</taxon>
        <taxon>Poales</taxon>
        <taxon>Poaceae</taxon>
        <taxon>BOP clade</taxon>
        <taxon>Oryzoideae</taxon>
        <taxon>Oryzeae</taxon>
        <taxon>Oryzinae</taxon>
        <taxon>Oryza</taxon>
        <taxon>Oryza sativa</taxon>
    </lineage>
</organism>
<feature type="signal peptide" evidence="5">
    <location>
        <begin position="1"/>
        <end position="28"/>
    </location>
</feature>
<feature type="chain" id="PRO_0000397896" description="Early nodulin-like protein 1">
    <location>
        <begin position="29"/>
        <end position="206"/>
    </location>
</feature>
<feature type="propeptide" id="PRO_0000457729" description="Removed in mature form" evidence="1">
    <location>
        <begin position="207"/>
        <end position="237"/>
    </location>
</feature>
<feature type="domain" description="Phytocyanin" evidence="3">
    <location>
        <begin position="29"/>
        <end position="134"/>
    </location>
</feature>
<feature type="region of interest" description="Disordered" evidence="4">
    <location>
        <begin position="139"/>
        <end position="215"/>
    </location>
</feature>
<feature type="compositionally biased region" description="Low complexity" evidence="4">
    <location>
        <begin position="140"/>
        <end position="152"/>
    </location>
</feature>
<feature type="compositionally biased region" description="Low complexity" evidence="4">
    <location>
        <begin position="201"/>
        <end position="215"/>
    </location>
</feature>
<feature type="lipid moiety-binding region" description="GPI-anchor amidated serine" evidence="1">
    <location>
        <position position="206"/>
    </location>
</feature>
<feature type="glycosylation site" description="N-linked (GlcNAc...) asparagine" evidence="2">
    <location>
        <position position="59"/>
    </location>
</feature>
<feature type="disulfide bond" evidence="3">
    <location>
        <begin position="85"/>
        <end position="122"/>
    </location>
</feature>